<keyword id="KW-0058">Aromatic hydrocarbons catabolism</keyword>
<keyword id="KW-0456">Lyase</keyword>
<keyword id="KW-0464">Manganese</keyword>
<keyword id="KW-0479">Metal-binding</keyword>
<keyword id="KW-0614">Plasmid</keyword>
<geneLocation type="plasmid">
    <name>pRHL1</name>
</geneLocation>
<dbReference type="EC" id="4.1.3.39" evidence="1"/>
<dbReference type="EMBL" id="CP000432">
    <property type="protein sequence ID" value="ABH00063.1"/>
    <property type="molecule type" value="Genomic_DNA"/>
</dbReference>
<dbReference type="RefSeq" id="WP_011599739.1">
    <property type="nucleotide sequence ID" value="NC_008269.1"/>
</dbReference>
<dbReference type="SMR" id="Q0RXC3"/>
<dbReference type="KEGG" id="rha:RHA1_ro09019"/>
<dbReference type="PATRIC" id="fig|101510.16.peg.8302"/>
<dbReference type="HOGENOM" id="CLU_049173_0_0_11"/>
<dbReference type="OrthoDB" id="9803573at2"/>
<dbReference type="Proteomes" id="UP000008710">
    <property type="component" value="Plasmid pRHL1"/>
</dbReference>
<dbReference type="GO" id="GO:0003852">
    <property type="term" value="F:2-isopropylmalate synthase activity"/>
    <property type="evidence" value="ECO:0007669"/>
    <property type="project" value="TreeGrafter"/>
</dbReference>
<dbReference type="GO" id="GO:0008701">
    <property type="term" value="F:4-hydroxy-2-oxovalerate aldolase activity"/>
    <property type="evidence" value="ECO:0007669"/>
    <property type="project" value="UniProtKB-UniRule"/>
</dbReference>
<dbReference type="GO" id="GO:0030145">
    <property type="term" value="F:manganese ion binding"/>
    <property type="evidence" value="ECO:0007669"/>
    <property type="project" value="UniProtKB-UniRule"/>
</dbReference>
<dbReference type="GO" id="GO:0009056">
    <property type="term" value="P:catabolic process"/>
    <property type="evidence" value="ECO:0007669"/>
    <property type="project" value="UniProtKB-KW"/>
</dbReference>
<dbReference type="GO" id="GO:0009098">
    <property type="term" value="P:L-leucine biosynthetic process"/>
    <property type="evidence" value="ECO:0007669"/>
    <property type="project" value="TreeGrafter"/>
</dbReference>
<dbReference type="CDD" id="cd07943">
    <property type="entry name" value="DRE_TIM_HOA"/>
    <property type="match status" value="1"/>
</dbReference>
<dbReference type="Gene3D" id="1.10.8.60">
    <property type="match status" value="1"/>
</dbReference>
<dbReference type="Gene3D" id="3.20.20.70">
    <property type="entry name" value="Aldolase class I"/>
    <property type="match status" value="1"/>
</dbReference>
<dbReference type="HAMAP" id="MF_01656">
    <property type="entry name" value="HOA"/>
    <property type="match status" value="1"/>
</dbReference>
<dbReference type="InterPro" id="IPR050073">
    <property type="entry name" value="2-IPM_HCS-like"/>
</dbReference>
<dbReference type="InterPro" id="IPR017629">
    <property type="entry name" value="4OH_2_O-val_aldolase"/>
</dbReference>
<dbReference type="InterPro" id="IPR013785">
    <property type="entry name" value="Aldolase_TIM"/>
</dbReference>
<dbReference type="InterPro" id="IPR012425">
    <property type="entry name" value="DmpG_comm"/>
</dbReference>
<dbReference type="InterPro" id="IPR035685">
    <property type="entry name" value="DRE_TIM_HOA"/>
</dbReference>
<dbReference type="InterPro" id="IPR000891">
    <property type="entry name" value="PYR_CT"/>
</dbReference>
<dbReference type="NCBIfam" id="TIGR03217">
    <property type="entry name" value="4OH_2_O_val_ald"/>
    <property type="match status" value="1"/>
</dbReference>
<dbReference type="NCBIfam" id="NF006049">
    <property type="entry name" value="PRK08195.1"/>
    <property type="match status" value="1"/>
</dbReference>
<dbReference type="PANTHER" id="PTHR10277:SF9">
    <property type="entry name" value="2-ISOPROPYLMALATE SYNTHASE 1, CHLOROPLASTIC-RELATED"/>
    <property type="match status" value="1"/>
</dbReference>
<dbReference type="PANTHER" id="PTHR10277">
    <property type="entry name" value="HOMOCITRATE SYNTHASE-RELATED"/>
    <property type="match status" value="1"/>
</dbReference>
<dbReference type="Pfam" id="PF07836">
    <property type="entry name" value="DmpG_comm"/>
    <property type="match status" value="1"/>
</dbReference>
<dbReference type="Pfam" id="PF00682">
    <property type="entry name" value="HMGL-like"/>
    <property type="match status" value="1"/>
</dbReference>
<dbReference type="SUPFAM" id="SSF51569">
    <property type="entry name" value="Aldolase"/>
    <property type="match status" value="1"/>
</dbReference>
<dbReference type="SUPFAM" id="SSF89000">
    <property type="entry name" value="post-HMGL domain-like"/>
    <property type="match status" value="1"/>
</dbReference>
<dbReference type="PROSITE" id="PS50991">
    <property type="entry name" value="PYR_CT"/>
    <property type="match status" value="1"/>
</dbReference>
<accession>Q0RXC3</accession>
<feature type="chain" id="PRO_0000387902" description="4-hydroxy-2-oxovalerate aldolase 6">
    <location>
        <begin position="1"/>
        <end position="354"/>
    </location>
</feature>
<feature type="domain" description="Pyruvate carboxyltransferase" evidence="1">
    <location>
        <begin position="10"/>
        <end position="262"/>
    </location>
</feature>
<feature type="active site" description="Proton acceptor" evidence="1">
    <location>
        <position position="22"/>
    </location>
</feature>
<feature type="binding site" evidence="1">
    <location>
        <begin position="18"/>
        <end position="19"/>
    </location>
    <ligand>
        <name>substrate</name>
    </ligand>
</feature>
<feature type="binding site" evidence="1">
    <location>
        <position position="19"/>
    </location>
    <ligand>
        <name>Mn(2+)</name>
        <dbReference type="ChEBI" id="CHEBI:29035"/>
    </ligand>
</feature>
<feature type="binding site" evidence="1">
    <location>
        <position position="172"/>
    </location>
    <ligand>
        <name>substrate</name>
    </ligand>
</feature>
<feature type="binding site" evidence="1">
    <location>
        <position position="201"/>
    </location>
    <ligand>
        <name>Mn(2+)</name>
        <dbReference type="ChEBI" id="CHEBI:29035"/>
    </ligand>
</feature>
<feature type="binding site" evidence="1">
    <location>
        <position position="201"/>
    </location>
    <ligand>
        <name>substrate</name>
    </ligand>
</feature>
<feature type="binding site" evidence="1">
    <location>
        <position position="203"/>
    </location>
    <ligand>
        <name>Mn(2+)</name>
        <dbReference type="ChEBI" id="CHEBI:29035"/>
    </ligand>
</feature>
<feature type="binding site" evidence="1">
    <location>
        <position position="292"/>
    </location>
    <ligand>
        <name>substrate</name>
    </ligand>
</feature>
<feature type="site" description="Transition state stabilizer" evidence="1">
    <location>
        <position position="18"/>
    </location>
</feature>
<organism>
    <name type="scientific">Rhodococcus jostii (strain RHA1)</name>
    <dbReference type="NCBI Taxonomy" id="101510"/>
    <lineage>
        <taxon>Bacteria</taxon>
        <taxon>Bacillati</taxon>
        <taxon>Actinomycetota</taxon>
        <taxon>Actinomycetes</taxon>
        <taxon>Mycobacteriales</taxon>
        <taxon>Nocardiaceae</taxon>
        <taxon>Rhodococcus</taxon>
    </lineage>
</organism>
<gene>
    <name type="ordered locus">RHA1_ro09019</name>
</gene>
<evidence type="ECO:0000255" key="1">
    <source>
        <dbReference type="HAMAP-Rule" id="MF_01656"/>
    </source>
</evidence>
<reference key="1">
    <citation type="journal article" date="2006" name="Proc. Natl. Acad. Sci. U.S.A.">
        <title>The complete genome of Rhodococcus sp. RHA1 provides insights into a catabolic powerhouse.</title>
        <authorList>
            <person name="McLeod M.P."/>
            <person name="Warren R.L."/>
            <person name="Hsiao W.W.L."/>
            <person name="Araki N."/>
            <person name="Myhre M."/>
            <person name="Fernandes C."/>
            <person name="Miyazawa D."/>
            <person name="Wong W."/>
            <person name="Lillquist A.L."/>
            <person name="Wang D."/>
            <person name="Dosanjh M."/>
            <person name="Hara H."/>
            <person name="Petrescu A."/>
            <person name="Morin R.D."/>
            <person name="Yang G."/>
            <person name="Stott J.M."/>
            <person name="Schein J.E."/>
            <person name="Shin H."/>
            <person name="Smailus D."/>
            <person name="Siddiqui A.S."/>
            <person name="Marra M.A."/>
            <person name="Jones S.J.M."/>
            <person name="Holt R."/>
            <person name="Brinkman F.S.L."/>
            <person name="Miyauchi K."/>
            <person name="Fukuda M."/>
            <person name="Davies J.E."/>
            <person name="Mohn W.W."/>
            <person name="Eltis L.D."/>
        </authorList>
    </citation>
    <scope>NUCLEOTIDE SEQUENCE [LARGE SCALE GENOMIC DNA]</scope>
    <source>
        <strain>RHA1</strain>
    </source>
</reference>
<protein>
    <recommendedName>
        <fullName evidence="1">4-hydroxy-2-oxovalerate aldolase 6</fullName>
        <shortName evidence="1">HOA 6</shortName>
        <ecNumber evidence="1">4.1.3.39</ecNumber>
    </recommendedName>
    <alternativeName>
        <fullName evidence="1">4-hydroxy-2-keto-pentanoic acid aldolase 6</fullName>
    </alternativeName>
    <alternativeName>
        <fullName evidence="1">4-hydroxy-2-oxopentanoate aldolase 6</fullName>
    </alternativeName>
</protein>
<name>HOA6_RHOJR</name>
<comment type="catalytic activity">
    <reaction evidence="1">
        <text>(S)-4-hydroxy-2-oxopentanoate = acetaldehyde + pyruvate</text>
        <dbReference type="Rhea" id="RHEA:22624"/>
        <dbReference type="ChEBI" id="CHEBI:15343"/>
        <dbReference type="ChEBI" id="CHEBI:15361"/>
        <dbReference type="ChEBI" id="CHEBI:73143"/>
        <dbReference type="EC" id="4.1.3.39"/>
    </reaction>
</comment>
<comment type="similarity">
    <text evidence="1">Belongs to the 4-hydroxy-2-oxovalerate aldolase family.</text>
</comment>
<sequence>MTRPELRDDVRIVDTTLRDGSHAQSHQFTESQVRDTVRALDGAGVEVIEVTHGDGLGGSTFNYGFSRISDLELVQVAADTAEQAKIAVLLVPGIGTADDLRKAADRGAEVVRIATHCTEADVSLQHFEIARDLGMQTCGFLMMAHRTTPEELARQARLMVDAGCQVPYVTDSAGALLMHEAKDRFDALITEVGDDAWVGYHGHQNMSLGVANSVIAYEAGVRYIDGSLCALGAGAGNSPTELLAAIFDRMNIATGLDVMATLDAAETVVRPYLNRWPKIDRNAIVQGWVGVYSSFLLHAETAGARYGVPVHEILRRCGELGYVGGQEDMIIDVAIQLAKVSGTVSEPSASLVAG</sequence>
<proteinExistence type="inferred from homology"/>